<accession>Q9D842</accession>
<accession>Q8BZL5</accession>
<accession>Q99LX6</accession>
<organism>
    <name type="scientific">Mus musculus</name>
    <name type="common">Mouse</name>
    <dbReference type="NCBI Taxonomy" id="10090"/>
    <lineage>
        <taxon>Eukaryota</taxon>
        <taxon>Metazoa</taxon>
        <taxon>Chordata</taxon>
        <taxon>Craniata</taxon>
        <taxon>Vertebrata</taxon>
        <taxon>Euteleostomi</taxon>
        <taxon>Mammalia</taxon>
        <taxon>Eutheria</taxon>
        <taxon>Euarchontoglires</taxon>
        <taxon>Glires</taxon>
        <taxon>Rodentia</taxon>
        <taxon>Myomorpha</taxon>
        <taxon>Muroidea</taxon>
        <taxon>Muridae</taxon>
        <taxon>Murinae</taxon>
        <taxon>Mus</taxon>
        <taxon>Mus</taxon>
    </lineage>
</organism>
<dbReference type="EC" id="3.1.-.-" evidence="2"/>
<dbReference type="EMBL" id="AK008513">
    <property type="protein sequence ID" value="BAB25711.1"/>
    <property type="molecule type" value="mRNA"/>
</dbReference>
<dbReference type="EMBL" id="AK034191">
    <property type="protein sequence ID" value="BAC28625.1"/>
    <property type="molecule type" value="mRNA"/>
</dbReference>
<dbReference type="EMBL" id="BC002179">
    <property type="protein sequence ID" value="AAH02179.1"/>
    <property type="molecule type" value="mRNA"/>
</dbReference>
<dbReference type="CCDS" id="CCDS20324.1">
    <molecule id="Q9D842-3"/>
</dbReference>
<dbReference type="CCDS" id="CCDS51839.1">
    <molecule id="Q9D842-1"/>
</dbReference>
<dbReference type="RefSeq" id="NP_001163960.1">
    <molecule id="Q9D842-1"/>
    <property type="nucleotide sequence ID" value="NM_001170489.1"/>
</dbReference>
<dbReference type="RefSeq" id="NP_077213.2">
    <molecule id="Q9D842-3"/>
    <property type="nucleotide sequence ID" value="NM_024251.4"/>
</dbReference>
<dbReference type="SMR" id="Q9D842"/>
<dbReference type="BioGRID" id="215153">
    <property type="interactions" value="5"/>
</dbReference>
<dbReference type="FunCoup" id="Q9D842">
    <property type="interactions" value="3041"/>
</dbReference>
<dbReference type="STRING" id="10090.ENSMUSP00000032130"/>
<dbReference type="iPTMnet" id="Q9D842"/>
<dbReference type="PhosphoSitePlus" id="Q9D842"/>
<dbReference type="SwissPalm" id="Q9D842"/>
<dbReference type="jPOST" id="Q9D842"/>
<dbReference type="PaxDb" id="10090-ENSMUSP00000032130"/>
<dbReference type="PeptideAtlas" id="Q9D842"/>
<dbReference type="ProteomicsDB" id="296375">
    <molecule id="Q9D842-1"/>
</dbReference>
<dbReference type="ProteomicsDB" id="296376">
    <molecule id="Q9D842-2"/>
</dbReference>
<dbReference type="ProteomicsDB" id="296377">
    <molecule id="Q9D842-3"/>
</dbReference>
<dbReference type="Pumba" id="Q9D842"/>
<dbReference type="Antibodypedia" id="30942">
    <property type="antibodies" value="265 antibodies from 27 providers"/>
</dbReference>
<dbReference type="Ensembl" id="ENSMUST00000032130.8">
    <molecule id="Q9D842-1"/>
    <property type="protein sequence ID" value="ENSMUSP00000032130.3"/>
    <property type="gene ID" value="ENSMUSG00000030051.11"/>
</dbReference>
<dbReference type="Ensembl" id="ENSMUST00000065997.5">
    <molecule id="Q9D842-3"/>
    <property type="protein sequence ID" value="ENSMUSP00000066232.3"/>
    <property type="gene ID" value="ENSMUSG00000030051.11"/>
</dbReference>
<dbReference type="GeneID" id="72103"/>
<dbReference type="KEGG" id="mmu:72103"/>
<dbReference type="UCSC" id="uc009ctq.2">
    <molecule id="Q9D842-3"/>
    <property type="organism name" value="mouse"/>
</dbReference>
<dbReference type="UCSC" id="uc009ctr.2">
    <molecule id="Q9D842-1"/>
    <property type="organism name" value="mouse"/>
</dbReference>
<dbReference type="UCSC" id="uc012eon.1">
    <molecule id="Q9D842-2"/>
    <property type="organism name" value="mouse"/>
</dbReference>
<dbReference type="AGR" id="MGI:1919353"/>
<dbReference type="CTD" id="200558"/>
<dbReference type="MGI" id="MGI:1919353">
    <property type="gene designation" value="Aplf"/>
</dbReference>
<dbReference type="VEuPathDB" id="HostDB:ENSMUSG00000030051"/>
<dbReference type="eggNOG" id="ENOG502R7QZ">
    <property type="taxonomic scope" value="Eukaryota"/>
</dbReference>
<dbReference type="GeneTree" id="ENSGT00390000010591"/>
<dbReference type="HOGENOM" id="CLU_043152_0_0_1"/>
<dbReference type="InParanoid" id="Q9D842"/>
<dbReference type="OMA" id="PCFYRSS"/>
<dbReference type="OrthoDB" id="10256774at2759"/>
<dbReference type="PhylomeDB" id="Q9D842"/>
<dbReference type="TreeFam" id="TF326160"/>
<dbReference type="BioGRID-ORCS" id="72103">
    <property type="hits" value="1 hit in 114 CRISPR screens"/>
</dbReference>
<dbReference type="ChiTaRS" id="Aplf">
    <property type="organism name" value="mouse"/>
</dbReference>
<dbReference type="PRO" id="PR:Q9D842"/>
<dbReference type="Proteomes" id="UP000000589">
    <property type="component" value="Chromosome 6"/>
</dbReference>
<dbReference type="RNAct" id="Q9D842">
    <property type="molecule type" value="protein"/>
</dbReference>
<dbReference type="Bgee" id="ENSMUSG00000030051">
    <property type="expression patterns" value="Expressed in otic placode and 166 other cell types or tissues"/>
</dbReference>
<dbReference type="ExpressionAtlas" id="Q9D842">
    <property type="expression patterns" value="baseline and differential"/>
</dbReference>
<dbReference type="GO" id="GO:0005829">
    <property type="term" value="C:cytosol"/>
    <property type="evidence" value="ECO:0000314"/>
    <property type="project" value="UniProtKB"/>
</dbReference>
<dbReference type="GO" id="GO:0005654">
    <property type="term" value="C:nucleoplasm"/>
    <property type="evidence" value="ECO:0007669"/>
    <property type="project" value="Ensembl"/>
</dbReference>
<dbReference type="GO" id="GO:0005634">
    <property type="term" value="C:nucleus"/>
    <property type="evidence" value="ECO:0000314"/>
    <property type="project" value="UniProtKB"/>
</dbReference>
<dbReference type="GO" id="GO:0090734">
    <property type="term" value="C:site of DNA damage"/>
    <property type="evidence" value="ECO:0000250"/>
    <property type="project" value="UniProtKB"/>
</dbReference>
<dbReference type="GO" id="GO:0035861">
    <property type="term" value="C:site of double-strand break"/>
    <property type="evidence" value="ECO:0000250"/>
    <property type="project" value="UniProtKB"/>
</dbReference>
<dbReference type="GO" id="GO:0008408">
    <property type="term" value="F:3'-5' exonuclease activity"/>
    <property type="evidence" value="ECO:0000250"/>
    <property type="project" value="UniProtKB"/>
</dbReference>
<dbReference type="GO" id="GO:0160002">
    <property type="term" value="F:ADP-D-ribose modification-dependent protein binding"/>
    <property type="evidence" value="ECO:0000250"/>
    <property type="project" value="UniProtKB"/>
</dbReference>
<dbReference type="GO" id="GO:0004520">
    <property type="term" value="F:DNA endonuclease activity"/>
    <property type="evidence" value="ECO:0000250"/>
    <property type="project" value="UniProtKB"/>
</dbReference>
<dbReference type="GO" id="GO:0003906">
    <property type="term" value="F:DNA-(apurinic or apyrimidinic site) endonuclease activity"/>
    <property type="evidence" value="ECO:0000250"/>
    <property type="project" value="UniProtKB"/>
</dbReference>
<dbReference type="GO" id="GO:0042393">
    <property type="term" value="F:histone binding"/>
    <property type="evidence" value="ECO:0000250"/>
    <property type="project" value="UniProtKB"/>
</dbReference>
<dbReference type="GO" id="GO:0140713">
    <property type="term" value="F:histone chaperone activity"/>
    <property type="evidence" value="ECO:0000250"/>
    <property type="project" value="UniProtKB"/>
</dbReference>
<dbReference type="GO" id="GO:0000166">
    <property type="term" value="F:nucleotide binding"/>
    <property type="evidence" value="ECO:0000250"/>
    <property type="project" value="UniProtKB"/>
</dbReference>
<dbReference type="GO" id="GO:0072572">
    <property type="term" value="F:poly-ADP-D-ribose binding"/>
    <property type="evidence" value="ECO:0000250"/>
    <property type="project" value="UniProtKB"/>
</dbReference>
<dbReference type="GO" id="GO:0008270">
    <property type="term" value="F:zinc ion binding"/>
    <property type="evidence" value="ECO:0007669"/>
    <property type="project" value="UniProtKB-KW"/>
</dbReference>
<dbReference type="GO" id="GO:0006974">
    <property type="term" value="P:DNA damage response"/>
    <property type="evidence" value="ECO:0000250"/>
    <property type="project" value="UniProtKB"/>
</dbReference>
<dbReference type="GO" id="GO:0140861">
    <property type="term" value="P:DNA repair-dependent chromatin remodeling"/>
    <property type="evidence" value="ECO:0000250"/>
    <property type="project" value="UniProtKB"/>
</dbReference>
<dbReference type="GO" id="GO:0006302">
    <property type="term" value="P:double-strand break repair"/>
    <property type="evidence" value="ECO:0000315"/>
    <property type="project" value="MGI"/>
</dbReference>
<dbReference type="GO" id="GO:0006303">
    <property type="term" value="P:double-strand break repair via nonhomologous end joining"/>
    <property type="evidence" value="ECO:0000250"/>
    <property type="project" value="UniProtKB"/>
</dbReference>
<dbReference type="GO" id="GO:0007566">
    <property type="term" value="P:embryo implantation"/>
    <property type="evidence" value="ECO:0000315"/>
    <property type="project" value="UniProtKB"/>
</dbReference>
<dbReference type="GO" id="GO:0071168">
    <property type="term" value="P:protein localization to chromatin"/>
    <property type="evidence" value="ECO:0007669"/>
    <property type="project" value="Ensembl"/>
</dbReference>
<dbReference type="GO" id="GO:0010717">
    <property type="term" value="P:regulation of epithelial to mesenchymal transition"/>
    <property type="evidence" value="ECO:0000315"/>
    <property type="project" value="UniProtKB"/>
</dbReference>
<dbReference type="GO" id="GO:0045191">
    <property type="term" value="P:regulation of isotype switching"/>
    <property type="evidence" value="ECO:0000315"/>
    <property type="project" value="MGI"/>
</dbReference>
<dbReference type="GO" id="GO:0000012">
    <property type="term" value="P:single strand break repair"/>
    <property type="evidence" value="ECO:0000250"/>
    <property type="project" value="UniProtKB"/>
</dbReference>
<dbReference type="CDD" id="cd22717">
    <property type="entry name" value="FHA_APLF"/>
    <property type="match status" value="1"/>
</dbReference>
<dbReference type="FunFam" id="2.60.200.20:FF:000026">
    <property type="entry name" value="Aprataxin and PNKP like factor"/>
    <property type="match status" value="1"/>
</dbReference>
<dbReference type="Gene3D" id="2.60.200.20">
    <property type="match status" value="1"/>
</dbReference>
<dbReference type="InterPro" id="IPR039253">
    <property type="entry name" value="APLF"/>
</dbReference>
<dbReference type="InterPro" id="IPR019406">
    <property type="entry name" value="APLF_PBZ"/>
</dbReference>
<dbReference type="InterPro" id="IPR041388">
    <property type="entry name" value="FHA_2"/>
</dbReference>
<dbReference type="InterPro" id="IPR008984">
    <property type="entry name" value="SMAD_FHA_dom_sf"/>
</dbReference>
<dbReference type="PANTHER" id="PTHR21315:SF2">
    <property type="entry name" value="APRATAXIN AND PNK-LIKE FACTOR"/>
    <property type="match status" value="1"/>
</dbReference>
<dbReference type="PANTHER" id="PTHR21315">
    <property type="entry name" value="APRATAXIN AND PNK-LIKE FACTOR-RELATED"/>
    <property type="match status" value="1"/>
</dbReference>
<dbReference type="Pfam" id="PF17913">
    <property type="entry name" value="FHA_2"/>
    <property type="match status" value="1"/>
</dbReference>
<dbReference type="Pfam" id="PF10283">
    <property type="entry name" value="zf-CCHH"/>
    <property type="match status" value="2"/>
</dbReference>
<dbReference type="SUPFAM" id="SSF49879">
    <property type="entry name" value="SMAD/FHA domain"/>
    <property type="match status" value="1"/>
</dbReference>
<name>APLF_MOUSE</name>
<sequence length="499" mass="54968">MPSDFFLQPLDGGPRVPVGPGQTVIGRGPLLGITDKRVSRRHAILEVVDSQLRIKPIHRNPCFYQSSEKSQHSPMETQVWSQLHPGDSFSLLLDKYAFRVFSAESEVEMECTLRNSQMLDEDDILSEMQKSPVVNLPDKTTGASQLQGSPEITKTKCPTIDPMSSSGECRAFSEHQPRPTQRKRILPAWMLAESLSDQSLSTPAEGGDKDVIQRSGKAGTCEDRTPGNTSWHGKKRLSPSGNSKSVSAEQDPGKKCRKADQEGPGVSSENVPESSSSNIVKDPDVDIVKTNKQKDGILIEELGEVSKHKAATKPTTNEEGESCARVQSKSPPEKSQGCHPESSSAPSSPDALHTDTADPVLGCSEESKVRRTACMYGANCYRRNPLHFQHFSHPGDSDYGEVHGTDEGVIGDRPECPYGASCYRKNPQHKMEYRHSALPARVALDEDDDDVGQPSDDEDEEDYEPTDEDSDWHPGKDDEEQEDVDELLKEAKSSLHLKH</sequence>
<evidence type="ECO:0000250" key="1"/>
<evidence type="ECO:0000250" key="2">
    <source>
        <dbReference type="UniProtKB" id="Q8IW19"/>
    </source>
</evidence>
<evidence type="ECO:0000256" key="3">
    <source>
        <dbReference type="SAM" id="MobiDB-lite"/>
    </source>
</evidence>
<evidence type="ECO:0000269" key="4">
    <source>
    </source>
</evidence>
<evidence type="ECO:0000269" key="5">
    <source>
    </source>
</evidence>
<evidence type="ECO:0000269" key="6">
    <source>
    </source>
</evidence>
<evidence type="ECO:0000303" key="7">
    <source>
    </source>
</evidence>
<evidence type="ECO:0000303" key="8">
    <source>
    </source>
</evidence>
<evidence type="ECO:0000305" key="9"/>
<evidence type="ECO:0007744" key="10">
    <source>
    </source>
</evidence>
<reference key="1">
    <citation type="journal article" date="2005" name="Science">
        <title>The transcriptional landscape of the mammalian genome.</title>
        <authorList>
            <person name="Carninci P."/>
            <person name="Kasukawa T."/>
            <person name="Katayama S."/>
            <person name="Gough J."/>
            <person name="Frith M.C."/>
            <person name="Maeda N."/>
            <person name="Oyama R."/>
            <person name="Ravasi T."/>
            <person name="Lenhard B."/>
            <person name="Wells C."/>
            <person name="Kodzius R."/>
            <person name="Shimokawa K."/>
            <person name="Bajic V.B."/>
            <person name="Brenner S.E."/>
            <person name="Batalov S."/>
            <person name="Forrest A.R."/>
            <person name="Zavolan M."/>
            <person name="Davis M.J."/>
            <person name="Wilming L.G."/>
            <person name="Aidinis V."/>
            <person name="Allen J.E."/>
            <person name="Ambesi-Impiombato A."/>
            <person name="Apweiler R."/>
            <person name="Aturaliya R.N."/>
            <person name="Bailey T.L."/>
            <person name="Bansal M."/>
            <person name="Baxter L."/>
            <person name="Beisel K.W."/>
            <person name="Bersano T."/>
            <person name="Bono H."/>
            <person name="Chalk A.M."/>
            <person name="Chiu K.P."/>
            <person name="Choudhary V."/>
            <person name="Christoffels A."/>
            <person name="Clutterbuck D.R."/>
            <person name="Crowe M.L."/>
            <person name="Dalla E."/>
            <person name="Dalrymple B.P."/>
            <person name="de Bono B."/>
            <person name="Della Gatta G."/>
            <person name="di Bernardo D."/>
            <person name="Down T."/>
            <person name="Engstrom P."/>
            <person name="Fagiolini M."/>
            <person name="Faulkner G."/>
            <person name="Fletcher C.F."/>
            <person name="Fukushima T."/>
            <person name="Furuno M."/>
            <person name="Futaki S."/>
            <person name="Gariboldi M."/>
            <person name="Georgii-Hemming P."/>
            <person name="Gingeras T.R."/>
            <person name="Gojobori T."/>
            <person name="Green R.E."/>
            <person name="Gustincich S."/>
            <person name="Harbers M."/>
            <person name="Hayashi Y."/>
            <person name="Hensch T.K."/>
            <person name="Hirokawa N."/>
            <person name="Hill D."/>
            <person name="Huminiecki L."/>
            <person name="Iacono M."/>
            <person name="Ikeo K."/>
            <person name="Iwama A."/>
            <person name="Ishikawa T."/>
            <person name="Jakt M."/>
            <person name="Kanapin A."/>
            <person name="Katoh M."/>
            <person name="Kawasawa Y."/>
            <person name="Kelso J."/>
            <person name="Kitamura H."/>
            <person name="Kitano H."/>
            <person name="Kollias G."/>
            <person name="Krishnan S.P."/>
            <person name="Kruger A."/>
            <person name="Kummerfeld S.K."/>
            <person name="Kurochkin I.V."/>
            <person name="Lareau L.F."/>
            <person name="Lazarevic D."/>
            <person name="Lipovich L."/>
            <person name="Liu J."/>
            <person name="Liuni S."/>
            <person name="McWilliam S."/>
            <person name="Madan Babu M."/>
            <person name="Madera M."/>
            <person name="Marchionni L."/>
            <person name="Matsuda H."/>
            <person name="Matsuzawa S."/>
            <person name="Miki H."/>
            <person name="Mignone F."/>
            <person name="Miyake S."/>
            <person name="Morris K."/>
            <person name="Mottagui-Tabar S."/>
            <person name="Mulder N."/>
            <person name="Nakano N."/>
            <person name="Nakauchi H."/>
            <person name="Ng P."/>
            <person name="Nilsson R."/>
            <person name="Nishiguchi S."/>
            <person name="Nishikawa S."/>
            <person name="Nori F."/>
            <person name="Ohara O."/>
            <person name="Okazaki Y."/>
            <person name="Orlando V."/>
            <person name="Pang K.C."/>
            <person name="Pavan W.J."/>
            <person name="Pavesi G."/>
            <person name="Pesole G."/>
            <person name="Petrovsky N."/>
            <person name="Piazza S."/>
            <person name="Reed J."/>
            <person name="Reid J.F."/>
            <person name="Ring B.Z."/>
            <person name="Ringwald M."/>
            <person name="Rost B."/>
            <person name="Ruan Y."/>
            <person name="Salzberg S.L."/>
            <person name="Sandelin A."/>
            <person name="Schneider C."/>
            <person name="Schoenbach C."/>
            <person name="Sekiguchi K."/>
            <person name="Semple C.A."/>
            <person name="Seno S."/>
            <person name="Sessa L."/>
            <person name="Sheng Y."/>
            <person name="Shibata Y."/>
            <person name="Shimada H."/>
            <person name="Shimada K."/>
            <person name="Silva D."/>
            <person name="Sinclair B."/>
            <person name="Sperling S."/>
            <person name="Stupka E."/>
            <person name="Sugiura K."/>
            <person name="Sultana R."/>
            <person name="Takenaka Y."/>
            <person name="Taki K."/>
            <person name="Tammoja K."/>
            <person name="Tan S.L."/>
            <person name="Tang S."/>
            <person name="Taylor M.S."/>
            <person name="Tegner J."/>
            <person name="Teichmann S.A."/>
            <person name="Ueda H.R."/>
            <person name="van Nimwegen E."/>
            <person name="Verardo R."/>
            <person name="Wei C.L."/>
            <person name="Yagi K."/>
            <person name="Yamanishi H."/>
            <person name="Zabarovsky E."/>
            <person name="Zhu S."/>
            <person name="Zimmer A."/>
            <person name="Hide W."/>
            <person name="Bult C."/>
            <person name="Grimmond S.M."/>
            <person name="Teasdale R.D."/>
            <person name="Liu E.T."/>
            <person name="Brusic V."/>
            <person name="Quackenbush J."/>
            <person name="Wahlestedt C."/>
            <person name="Mattick J.S."/>
            <person name="Hume D.A."/>
            <person name="Kai C."/>
            <person name="Sasaki D."/>
            <person name="Tomaru Y."/>
            <person name="Fukuda S."/>
            <person name="Kanamori-Katayama M."/>
            <person name="Suzuki M."/>
            <person name="Aoki J."/>
            <person name="Arakawa T."/>
            <person name="Iida J."/>
            <person name="Imamura K."/>
            <person name="Itoh M."/>
            <person name="Kato T."/>
            <person name="Kawaji H."/>
            <person name="Kawagashira N."/>
            <person name="Kawashima T."/>
            <person name="Kojima M."/>
            <person name="Kondo S."/>
            <person name="Konno H."/>
            <person name="Nakano K."/>
            <person name="Ninomiya N."/>
            <person name="Nishio T."/>
            <person name="Okada M."/>
            <person name="Plessy C."/>
            <person name="Shibata K."/>
            <person name="Shiraki T."/>
            <person name="Suzuki S."/>
            <person name="Tagami M."/>
            <person name="Waki K."/>
            <person name="Watahiki A."/>
            <person name="Okamura-Oho Y."/>
            <person name="Suzuki H."/>
            <person name="Kawai J."/>
            <person name="Hayashizaki Y."/>
        </authorList>
    </citation>
    <scope>NUCLEOTIDE SEQUENCE [LARGE SCALE MRNA] (ISOFORMS 1 AND 3)</scope>
    <source>
        <strain>C57BL/6J</strain>
        <tissue>Diencephalon</tissue>
        <tissue>Small intestine</tissue>
    </source>
</reference>
<reference key="2">
    <citation type="journal article" date="2004" name="Genome Res.">
        <title>The status, quality, and expansion of the NIH full-length cDNA project: the Mammalian Gene Collection (MGC).</title>
        <authorList>
            <consortium name="The MGC Project Team"/>
        </authorList>
    </citation>
    <scope>NUCLEOTIDE SEQUENCE [LARGE SCALE MRNA] (ISOFORM 2)</scope>
    <source>
        <strain>FVB/N</strain>
        <tissue>Mammary gland</tissue>
    </source>
</reference>
<reference key="3">
    <citation type="journal article" date="2010" name="Cell">
        <title>A tissue-specific atlas of mouse protein phosphorylation and expression.</title>
        <authorList>
            <person name="Huttlin E.L."/>
            <person name="Jedrychowski M.P."/>
            <person name="Elias J.E."/>
            <person name="Goswami T."/>
            <person name="Rad R."/>
            <person name="Beausoleil S.A."/>
            <person name="Villen J."/>
            <person name="Haas W."/>
            <person name="Sowa M.E."/>
            <person name="Gygi S.P."/>
        </authorList>
    </citation>
    <scope>PHOSPHORYLATION [LARGE SCALE ANALYSIS] AT SER-149</scope>
    <scope>IDENTIFICATION BY MASS SPECTROMETRY [LARGE SCALE ANALYSIS]</scope>
    <source>
        <tissue>Brain</tissue>
        <tissue>Pancreas</tissue>
        <tissue>Spleen</tissue>
        <tissue>Testis</tissue>
    </source>
</reference>
<reference key="4">
    <citation type="journal article" date="2011" name="Mol. Cell">
        <title>PARP-3 and APLF function together to accelerate nonhomologous end-joining.</title>
        <authorList>
            <person name="Rulten S.L."/>
            <person name="Fisher A.E."/>
            <person name="Robert I."/>
            <person name="Zuma M.C."/>
            <person name="Rouleau M."/>
            <person name="Ju L."/>
            <person name="Poirier G."/>
            <person name="Reina-San-Martin B."/>
            <person name="Caldecott K.W."/>
        </authorList>
    </citation>
    <scope>FUNCTION</scope>
</reference>
<reference key="5">
    <citation type="journal article" date="2016" name="J. Cell Sci.">
        <title>Histone chaperone APLF regulates induction of pluripotency in murine fibroblasts.</title>
        <authorList>
            <person name="Syed K.M."/>
            <person name="Joseph S."/>
            <person name="Mukherjee A."/>
            <person name="Majumder A."/>
            <person name="Teixeira J.M."/>
            <person name="Dutta D."/>
            <person name="Pillai M.R."/>
        </authorList>
    </citation>
    <scope>FUNCTION</scope>
</reference>
<reference key="6">
    <citation type="journal article" date="2021" name="J. Cell Sci.">
        <title>Histone chaperone APLF level dictates the implantation of mouse embryos.</title>
        <authorList>
            <person name="Varghese P.C."/>
            <person name="Rajam S.M."/>
            <person name="Nandy D."/>
            <person name="Jory A."/>
            <person name="Mukherjee A."/>
            <person name="Dutta D."/>
        </authorList>
    </citation>
    <scope>FUNCTION</scope>
    <scope>SUBCELLULAR LOCATION</scope>
    <scope>DEVELOPMENTAL STAGE</scope>
</reference>
<feature type="chain" id="PRO_0000089343" description="Aprataxin and PNK-like factor">
    <location>
        <begin position="1"/>
        <end position="499"/>
    </location>
</feature>
<feature type="domain" description="FHA-like">
    <location>
        <begin position="1"/>
        <end position="108"/>
    </location>
</feature>
<feature type="zinc finger region" description="PBZ-type 1">
    <location>
        <begin position="372"/>
        <end position="393"/>
    </location>
</feature>
<feature type="zinc finger region" description="PBZ-type 2">
    <location>
        <begin position="414"/>
        <end position="435"/>
    </location>
</feature>
<feature type="region of interest" description="Disordered" evidence="3">
    <location>
        <begin position="134"/>
        <end position="183"/>
    </location>
</feature>
<feature type="region of interest" description="Disordered" evidence="3">
    <location>
        <begin position="197"/>
        <end position="292"/>
    </location>
</feature>
<feature type="region of interest" description="Disordered" evidence="3">
    <location>
        <begin position="305"/>
        <end position="358"/>
    </location>
</feature>
<feature type="region of interest" description="Flexible linker" evidence="1 2">
    <location>
        <begin position="401"/>
        <end position="411"/>
    </location>
</feature>
<feature type="region of interest" description="Disordered" evidence="3">
    <location>
        <begin position="440"/>
        <end position="499"/>
    </location>
</feature>
<feature type="short sequence motif" description="KBM" evidence="2">
    <location>
        <begin position="182"/>
        <end position="191"/>
    </location>
</feature>
<feature type="short sequence motif" description="NAP1L motif" evidence="2">
    <location>
        <begin position="463"/>
        <end position="487"/>
    </location>
</feature>
<feature type="compositionally biased region" description="Polar residues" evidence="3">
    <location>
        <begin position="141"/>
        <end position="152"/>
    </location>
</feature>
<feature type="compositionally biased region" description="Polar residues" evidence="3">
    <location>
        <begin position="239"/>
        <end position="248"/>
    </location>
</feature>
<feature type="compositionally biased region" description="Basic and acidic residues" evidence="3">
    <location>
        <begin position="251"/>
        <end position="261"/>
    </location>
</feature>
<feature type="compositionally biased region" description="Low complexity" evidence="3">
    <location>
        <begin position="264"/>
        <end position="278"/>
    </location>
</feature>
<feature type="compositionally biased region" description="Basic and acidic residues" evidence="3">
    <location>
        <begin position="281"/>
        <end position="292"/>
    </location>
</feature>
<feature type="compositionally biased region" description="Low complexity" evidence="3">
    <location>
        <begin position="340"/>
        <end position="349"/>
    </location>
</feature>
<feature type="compositionally biased region" description="Acidic residues" evidence="3">
    <location>
        <begin position="445"/>
        <end position="470"/>
    </location>
</feature>
<feature type="binding site" evidence="2">
    <location>
        <position position="371"/>
    </location>
    <ligand>
        <name>a glycoprotein</name>
        <dbReference type="ChEBI" id="CHEBI:17089"/>
    </ligand>
    <ligandPart>
        <name>poly[(1''-&gt;2')-ADP-alpha-D-ribose] group</name>
        <dbReference type="ChEBI" id="CHEBI:157741"/>
    </ligandPart>
</feature>
<feature type="binding site" evidence="2">
    <location>
        <position position="376"/>
    </location>
    <ligand>
        <name>a glycoprotein</name>
        <dbReference type="ChEBI" id="CHEBI:17089"/>
    </ligand>
    <ligandPart>
        <name>poly[(1''-&gt;2')-ADP-alpha-D-ribose] group</name>
        <dbReference type="ChEBI" id="CHEBI:157741"/>
    </ligandPart>
</feature>
<feature type="binding site" evidence="2">
    <location>
        <position position="381"/>
    </location>
    <ligand>
        <name>a glycoprotein</name>
        <dbReference type="ChEBI" id="CHEBI:17089"/>
    </ligand>
    <ligandPart>
        <name>poly[(1''-&gt;2')-ADP-alpha-D-ribose] group</name>
        <dbReference type="ChEBI" id="CHEBI:157741"/>
    </ligandPart>
</feature>
<feature type="binding site" evidence="2">
    <location>
        <position position="382"/>
    </location>
    <ligand>
        <name>a glycoprotein</name>
        <dbReference type="ChEBI" id="CHEBI:17089"/>
    </ligand>
    <ligandPart>
        <name>poly[(1''-&gt;2')-ADP-alpha-D-ribose] group</name>
        <dbReference type="ChEBI" id="CHEBI:157741"/>
    </ligandPart>
</feature>
<feature type="binding site" evidence="2">
    <location>
        <position position="418"/>
    </location>
    <ligand>
        <name>a glycoprotein</name>
        <dbReference type="ChEBI" id="CHEBI:17089"/>
    </ligand>
    <ligandPart>
        <name>poly[(1''-&gt;2')-ADP-alpha-D-ribose] group</name>
        <dbReference type="ChEBI" id="CHEBI:157741"/>
    </ligandPart>
</feature>
<feature type="binding site" evidence="2">
    <location>
        <position position="423"/>
    </location>
    <ligand>
        <name>a glycoprotein</name>
        <dbReference type="ChEBI" id="CHEBI:17089"/>
    </ligand>
    <ligandPart>
        <name>poly[(1''-&gt;2')-ADP-alpha-D-ribose] group</name>
        <dbReference type="ChEBI" id="CHEBI:157741"/>
    </ligandPart>
</feature>
<feature type="binding site" evidence="2">
    <location>
        <position position="424"/>
    </location>
    <ligand>
        <name>a glycoprotein</name>
        <dbReference type="ChEBI" id="CHEBI:17089"/>
    </ligand>
    <ligandPart>
        <name>poly[(1''-&gt;2')-ADP-alpha-D-ribose] group</name>
        <dbReference type="ChEBI" id="CHEBI:157741"/>
    </ligandPart>
</feature>
<feature type="modified residue" description="Phosphoserine; by ATM" evidence="2">
    <location>
        <position position="116"/>
    </location>
</feature>
<feature type="modified residue" description="Phosphoserine" evidence="10">
    <location>
        <position position="149"/>
    </location>
</feature>
<feature type="splice variant" id="VSP_014983" description="In isoform 2." evidence="7">
    <location>
        <begin position="1"/>
        <end position="108"/>
    </location>
</feature>
<feature type="splice variant" id="VSP_014982" description="In isoform 3." evidence="8">
    <original>MPSDFFLQPLDGGPRVPVGPGQTVIGRGPLLG</original>
    <variation>MPSVPEGGGYE</variation>
    <location>
        <begin position="1"/>
        <end position="32"/>
    </location>
</feature>
<feature type="splice variant" id="VSP_014984" description="In isoform 2 and isoform 3." evidence="7 8">
    <original>SSLHLKH</original>
    <variation>RFMRRKK</variation>
    <location>
        <begin position="493"/>
        <end position="499"/>
    </location>
</feature>
<feature type="sequence conflict" description="In Ref. 2; AAH02179." evidence="9" ref="2">
    <original>R</original>
    <variation>H</variation>
    <location>
        <position position="178"/>
    </location>
</feature>
<feature type="sequence conflict" description="In Ref. 1; BAB25711." evidence="9" ref="1">
    <original>S</original>
    <variation>F</variation>
    <location>
        <position position="470"/>
    </location>
</feature>
<keyword id="KW-0013">ADP-ribosylation</keyword>
<keyword id="KW-0025">Alternative splicing</keyword>
<keyword id="KW-0158">Chromosome</keyword>
<keyword id="KW-0175">Coiled coil</keyword>
<keyword id="KW-0963">Cytoplasm</keyword>
<keyword id="KW-0227">DNA damage</keyword>
<keyword id="KW-0234">DNA repair</keyword>
<keyword id="KW-0378">Hydrolase</keyword>
<keyword id="KW-0479">Metal-binding</keyword>
<keyword id="KW-0547">Nucleotide-binding</keyword>
<keyword id="KW-0539">Nucleus</keyword>
<keyword id="KW-0597">Phosphoprotein</keyword>
<keyword id="KW-1185">Reference proteome</keyword>
<keyword id="KW-0677">Repeat</keyword>
<keyword id="KW-0862">Zinc</keyword>
<keyword id="KW-0863">Zinc-finger</keyword>
<proteinExistence type="evidence at protein level"/>
<protein>
    <recommendedName>
        <fullName>Aprataxin and PNK-like factor</fullName>
        <ecNumber evidence="2">3.1.-.-</ecNumber>
    </recommendedName>
    <alternativeName>
        <fullName>Apurinic-apyrimidinic endonuclease APLF</fullName>
    </alternativeName>
</protein>
<gene>
    <name type="primary">Aplf</name>
</gene>
<comment type="function">
    <text evidence="2 4 5 6">Histone chaperone involved in single-strand and double-strand DNA break repair (By similarity). Recruited to sites of DNA damage through interaction with branched poly-ADP-ribose chains, a polymeric post-translational modification synthesized transiently at sites of chromosomal damage to accelerate DNA strand break repair reactions (By similarity). Following recruitment to DNA damage sites, acts as a histone chaperone that mediates histone eviction during DNA repair and promotes recruitment of histone variant MACROH2A1 (PubMed:27875275). Also has a nuclease activity: displays apurinic-apyrimidinic (AP) endonuclease and 3'-5' exonuclease activities in vitro (By similarity). Also able to introduce nicks at hydroxyuracil and other types of pyrimidine base damage (By similarity). Together with PARP3, promotes the retention of the LIG4-XRCC4 complex on chromatin and accelerate DNA ligation during non-homologous end-joining (NHEJ) (PubMed:21211721). Also acts as a negative regulator of cell pluripotency by promoting histone exchange (PubMed:27875275). Required for the embryo implantation during the epithelial to mesenchymal transition in females (PubMed:33277378).</text>
</comment>
<comment type="subunit">
    <text evidence="2">Interacts with LIG4 (By similarity). Interacts with PARP1 (By similarity). Interacts with XRCC4. Interacts (via KBM motif) with XRCC5 and XRCC6; promoting recruitment to DNA damage sites (By similarity). Interacts with XRCC1 (By similarity). Interacts (via C-terminal disordered region) with histones; interacts with histone H2A, H2B and H3-H4 (By similarity).</text>
</comment>
<comment type="subcellular location">
    <subcellularLocation>
        <location evidence="6">Nucleus</location>
    </subcellularLocation>
    <subcellularLocation>
        <location evidence="2">Chromosome</location>
    </subcellularLocation>
    <subcellularLocation>
        <location evidence="6">Cytoplasm</location>
        <location evidence="6">Cytosol</location>
    </subcellularLocation>
    <text evidence="2">Localizes to DNA damage sites. Accumulates at single-strand breaks and double-strand breaks via the PBZ-type zinc fingers.</text>
</comment>
<comment type="alternative products">
    <event type="alternative splicing"/>
    <isoform>
        <id>Q9D842-1</id>
        <name>1</name>
        <sequence type="displayed"/>
    </isoform>
    <isoform>
        <id>Q9D842-2</id>
        <name>2</name>
        <sequence type="described" ref="VSP_014983 VSP_014984"/>
    </isoform>
    <isoform>
        <id>Q9D842-3</id>
        <name>3</name>
        <sequence type="described" ref="VSP_014982 VSP_014984"/>
    </isoform>
</comment>
<comment type="developmental stage">
    <text evidence="6">Present in the 4-cell stage (PubMed:33277378). Expression is enhanced in early morula and late morula stage embryos (PubMed:33277378). Down-regulated during the first differentiation to form inner cell mass and trophectoderm within a blastocyst (32-cell stage) (PubMed:33277378).</text>
</comment>
<comment type="domain">
    <text evidence="2">The PBZ-type zinc fingers (also named CYR) mediate non-covalent poly-ADP-ribose-binding. Specifically recognizes branched poly-ADP-ribose chains generated by PARP2. Poly-ADP-ribose-binding is dependent on the presence of zinc and promotes its recruitment to DNA damage sites.</text>
</comment>
<comment type="domain">
    <text evidence="2">The KBM (Ku-binding motif) mediates interaction with XRCC5/Ku80 and XRCC6/Ku70 and recruitment to DNA damage sites.</text>
</comment>
<comment type="domain">
    <text evidence="2">The FHA-like domain mediates interaction with XRCC1 and XRCC4.</text>
</comment>
<comment type="domain">
    <text evidence="2">The NAP1L motif is required for the histone chaperone activity.</text>
</comment>
<comment type="PTM">
    <text evidence="2">Poly-ADP-ribosylated. In addition to binding non covalently poly-ADP-ribose via its PBZ-type zinc fingers, the protein is also covalently poly-ADP-ribosylated by PARP1.</text>
</comment>
<comment type="PTM">
    <text evidence="2">Phosphorylated in an ATM-dependent manner upon double-strand DNA break.</text>
</comment>
<comment type="similarity">
    <text evidence="9">Belongs to the APLF family.</text>
</comment>